<feature type="chain" id="PRO_1000092028" description="5'-nucleotidase SurE">
    <location>
        <begin position="1"/>
        <end position="251"/>
    </location>
</feature>
<feature type="binding site" evidence="1">
    <location>
        <position position="8"/>
    </location>
    <ligand>
        <name>a divalent metal cation</name>
        <dbReference type="ChEBI" id="CHEBI:60240"/>
    </ligand>
</feature>
<feature type="binding site" evidence="1">
    <location>
        <position position="9"/>
    </location>
    <ligand>
        <name>a divalent metal cation</name>
        <dbReference type="ChEBI" id="CHEBI:60240"/>
    </ligand>
</feature>
<feature type="binding site" evidence="1">
    <location>
        <position position="39"/>
    </location>
    <ligand>
        <name>a divalent metal cation</name>
        <dbReference type="ChEBI" id="CHEBI:60240"/>
    </ligand>
</feature>
<feature type="binding site" evidence="1">
    <location>
        <position position="95"/>
    </location>
    <ligand>
        <name>a divalent metal cation</name>
        <dbReference type="ChEBI" id="CHEBI:60240"/>
    </ligand>
</feature>
<evidence type="ECO:0000255" key="1">
    <source>
        <dbReference type="HAMAP-Rule" id="MF_00060"/>
    </source>
</evidence>
<dbReference type="EC" id="3.1.3.5" evidence="1"/>
<dbReference type="EMBL" id="CP001068">
    <property type="protein sequence ID" value="ACD26196.1"/>
    <property type="molecule type" value="Genomic_DNA"/>
</dbReference>
<dbReference type="SMR" id="B2U9T8"/>
<dbReference type="STRING" id="402626.Rpic_1048"/>
<dbReference type="KEGG" id="rpi:Rpic_1048"/>
<dbReference type="eggNOG" id="COG0496">
    <property type="taxonomic scope" value="Bacteria"/>
</dbReference>
<dbReference type="HOGENOM" id="CLU_045192_1_2_4"/>
<dbReference type="GO" id="GO:0005737">
    <property type="term" value="C:cytoplasm"/>
    <property type="evidence" value="ECO:0007669"/>
    <property type="project" value="UniProtKB-SubCell"/>
</dbReference>
<dbReference type="GO" id="GO:0008254">
    <property type="term" value="F:3'-nucleotidase activity"/>
    <property type="evidence" value="ECO:0007669"/>
    <property type="project" value="TreeGrafter"/>
</dbReference>
<dbReference type="GO" id="GO:0008253">
    <property type="term" value="F:5'-nucleotidase activity"/>
    <property type="evidence" value="ECO:0007669"/>
    <property type="project" value="UniProtKB-UniRule"/>
</dbReference>
<dbReference type="GO" id="GO:0004309">
    <property type="term" value="F:exopolyphosphatase activity"/>
    <property type="evidence" value="ECO:0007669"/>
    <property type="project" value="TreeGrafter"/>
</dbReference>
<dbReference type="GO" id="GO:0046872">
    <property type="term" value="F:metal ion binding"/>
    <property type="evidence" value="ECO:0007669"/>
    <property type="project" value="UniProtKB-UniRule"/>
</dbReference>
<dbReference type="GO" id="GO:0000166">
    <property type="term" value="F:nucleotide binding"/>
    <property type="evidence" value="ECO:0007669"/>
    <property type="project" value="UniProtKB-KW"/>
</dbReference>
<dbReference type="FunFam" id="3.40.1210.10:FF:000001">
    <property type="entry name" value="5'/3'-nucleotidase SurE"/>
    <property type="match status" value="1"/>
</dbReference>
<dbReference type="Gene3D" id="3.40.1210.10">
    <property type="entry name" value="Survival protein SurE-like phosphatase/nucleotidase"/>
    <property type="match status" value="1"/>
</dbReference>
<dbReference type="HAMAP" id="MF_00060">
    <property type="entry name" value="SurE"/>
    <property type="match status" value="1"/>
</dbReference>
<dbReference type="InterPro" id="IPR030048">
    <property type="entry name" value="SurE"/>
</dbReference>
<dbReference type="InterPro" id="IPR002828">
    <property type="entry name" value="SurE-like_Pase/nucleotidase"/>
</dbReference>
<dbReference type="InterPro" id="IPR036523">
    <property type="entry name" value="SurE-like_sf"/>
</dbReference>
<dbReference type="NCBIfam" id="NF001489">
    <property type="entry name" value="PRK00346.1-3"/>
    <property type="match status" value="1"/>
</dbReference>
<dbReference type="NCBIfam" id="NF001490">
    <property type="entry name" value="PRK00346.1-4"/>
    <property type="match status" value="1"/>
</dbReference>
<dbReference type="NCBIfam" id="TIGR00087">
    <property type="entry name" value="surE"/>
    <property type="match status" value="1"/>
</dbReference>
<dbReference type="PANTHER" id="PTHR30457">
    <property type="entry name" value="5'-NUCLEOTIDASE SURE"/>
    <property type="match status" value="1"/>
</dbReference>
<dbReference type="PANTHER" id="PTHR30457:SF12">
    <property type="entry name" value="5'_3'-NUCLEOTIDASE SURE"/>
    <property type="match status" value="1"/>
</dbReference>
<dbReference type="Pfam" id="PF01975">
    <property type="entry name" value="SurE"/>
    <property type="match status" value="1"/>
</dbReference>
<dbReference type="SUPFAM" id="SSF64167">
    <property type="entry name" value="SurE-like"/>
    <property type="match status" value="1"/>
</dbReference>
<gene>
    <name evidence="1" type="primary">surE</name>
    <name type="ordered locus">Rpic_1048</name>
</gene>
<comment type="function">
    <text evidence="1">Nucleotidase that shows phosphatase activity on nucleoside 5'-monophosphates.</text>
</comment>
<comment type="catalytic activity">
    <reaction evidence="1">
        <text>a ribonucleoside 5'-phosphate + H2O = a ribonucleoside + phosphate</text>
        <dbReference type="Rhea" id="RHEA:12484"/>
        <dbReference type="ChEBI" id="CHEBI:15377"/>
        <dbReference type="ChEBI" id="CHEBI:18254"/>
        <dbReference type="ChEBI" id="CHEBI:43474"/>
        <dbReference type="ChEBI" id="CHEBI:58043"/>
        <dbReference type="EC" id="3.1.3.5"/>
    </reaction>
</comment>
<comment type="cofactor">
    <cofactor evidence="1">
        <name>a divalent metal cation</name>
        <dbReference type="ChEBI" id="CHEBI:60240"/>
    </cofactor>
    <text evidence="1">Binds 1 divalent metal cation per subunit.</text>
</comment>
<comment type="subcellular location">
    <subcellularLocation>
        <location evidence="1">Cytoplasm</location>
    </subcellularLocation>
</comment>
<comment type="similarity">
    <text evidence="1">Belongs to the SurE nucleotidase family.</text>
</comment>
<organism>
    <name type="scientific">Ralstonia pickettii (strain 12J)</name>
    <dbReference type="NCBI Taxonomy" id="402626"/>
    <lineage>
        <taxon>Bacteria</taxon>
        <taxon>Pseudomonadati</taxon>
        <taxon>Pseudomonadota</taxon>
        <taxon>Betaproteobacteria</taxon>
        <taxon>Burkholderiales</taxon>
        <taxon>Burkholderiaceae</taxon>
        <taxon>Ralstonia</taxon>
    </lineage>
</organism>
<keyword id="KW-0963">Cytoplasm</keyword>
<keyword id="KW-0378">Hydrolase</keyword>
<keyword id="KW-0479">Metal-binding</keyword>
<keyword id="KW-0547">Nucleotide-binding</keyword>
<proteinExistence type="inferred from homology"/>
<protein>
    <recommendedName>
        <fullName evidence="1">5'-nucleotidase SurE</fullName>
        <ecNumber evidence="1">3.1.3.5</ecNumber>
    </recommendedName>
    <alternativeName>
        <fullName evidence="1">Nucleoside 5'-monophosphate phosphohydrolase</fullName>
    </alternativeName>
</protein>
<reference key="1">
    <citation type="submission" date="2008-05" db="EMBL/GenBank/DDBJ databases">
        <title>Complete sequence of chromosome 1 of Ralstonia pickettii 12J.</title>
        <authorList>
            <person name="Lucas S."/>
            <person name="Copeland A."/>
            <person name="Lapidus A."/>
            <person name="Glavina del Rio T."/>
            <person name="Dalin E."/>
            <person name="Tice H."/>
            <person name="Bruce D."/>
            <person name="Goodwin L."/>
            <person name="Pitluck S."/>
            <person name="Meincke L."/>
            <person name="Brettin T."/>
            <person name="Detter J.C."/>
            <person name="Han C."/>
            <person name="Kuske C.R."/>
            <person name="Schmutz J."/>
            <person name="Larimer F."/>
            <person name="Land M."/>
            <person name="Hauser L."/>
            <person name="Kyrpides N."/>
            <person name="Mikhailova N."/>
            <person name="Marsh T."/>
            <person name="Richardson P."/>
        </authorList>
    </citation>
    <scope>NUCLEOTIDE SEQUENCE [LARGE SCALE GENOMIC DNA]</scope>
    <source>
        <strain>12J</strain>
    </source>
</reference>
<sequence length="251" mass="27003">MHILIANDDGYLAPGLAALHRALSPLGRVTVVAPEQNHSGASNSLTLQRPLSVFEATDGAQKGFRFVNGTPTDCVHIALTGMIEEKPDLVVSGINQGQNMGEDVLYSGTVAAAIEGYLFGIPSIAFSQADKGWAHLDAAERVAREVVERYLSDPLDGPVLLNVNIPNLPYAELAGWRATRLGKRHQSQPVIRQANPRGEPIFWVGAAGDAKDASEGTDFHAVAHGFVSLTPLQLDLTDTAQLRTVRRWQTP</sequence>
<name>SURE_RALPJ</name>
<accession>B2U9T8</accession>